<name>PHCB2_MICDP</name>
<evidence type="ECO:0000250" key="1"/>
<evidence type="ECO:0000250" key="2">
    <source>
        <dbReference type="UniProtKB" id="P06539"/>
    </source>
</evidence>
<evidence type="ECO:0000269" key="3">
    <source>
    </source>
</evidence>
<evidence type="ECO:0000305" key="4"/>
<accession>P08039</accession>
<gene>
    <name type="primary">cpcB2</name>
</gene>
<feature type="chain" id="PRO_0000199146" description="C-phycocyanin-2 beta subunit">
    <location>
        <begin position="1"/>
        <end position="172"/>
    </location>
</feature>
<feature type="binding site" description="covalent" evidence="2">
    <location>
        <position position="82"/>
    </location>
    <ligand>
        <name>(2R,3E)-phycocyanobilin</name>
        <dbReference type="ChEBI" id="CHEBI:85275"/>
        <label>1</label>
    </ligand>
</feature>
<feature type="binding site" description="covalent" evidence="2">
    <location>
        <position position="153"/>
    </location>
    <ligand>
        <name>(2R,3E)-phycocyanobilin</name>
        <dbReference type="ChEBI" id="CHEBI:85275"/>
        <label>2</label>
    </ligand>
</feature>
<feature type="modified residue" description="N4-methylasparagine" evidence="2">
    <location>
        <position position="72"/>
    </location>
</feature>
<feature type="sequence conflict" description="In Ref. 2; CAA30061." evidence="4" ref="2">
    <original>A</original>
    <variation>R</variation>
    <location>
        <position position="12"/>
    </location>
</feature>
<feature type="sequence conflict" description="In Ref. 2; CAA30061." evidence="4" ref="2">
    <original>T</original>
    <variation>D</variation>
    <location>
        <position position="29"/>
    </location>
</feature>
<dbReference type="EMBL" id="X06451">
    <property type="protein sequence ID" value="CAA29750.1"/>
    <property type="molecule type" value="Genomic_DNA"/>
</dbReference>
<dbReference type="EMBL" id="X07012">
    <property type="protein sequence ID" value="CAA30061.1"/>
    <property type="molecule type" value="Genomic_DNA"/>
</dbReference>
<dbReference type="EMBL" id="M36276">
    <property type="protein sequence ID" value="AAA23289.1"/>
    <property type="molecule type" value="Genomic_DNA"/>
</dbReference>
<dbReference type="SMR" id="P08039"/>
<dbReference type="GO" id="GO:0030089">
    <property type="term" value="C:phycobilisome"/>
    <property type="evidence" value="ECO:0007669"/>
    <property type="project" value="UniProtKB-KW"/>
</dbReference>
<dbReference type="GO" id="GO:0031676">
    <property type="term" value="C:plasma membrane-derived thylakoid membrane"/>
    <property type="evidence" value="ECO:0007669"/>
    <property type="project" value="UniProtKB-SubCell"/>
</dbReference>
<dbReference type="GO" id="GO:0015979">
    <property type="term" value="P:photosynthesis"/>
    <property type="evidence" value="ECO:0007669"/>
    <property type="project" value="UniProtKB-KW"/>
</dbReference>
<dbReference type="CDD" id="cd14768">
    <property type="entry name" value="PC_PEC_beta"/>
    <property type="match status" value="1"/>
</dbReference>
<dbReference type="Gene3D" id="1.10.490.20">
    <property type="entry name" value="Phycocyanins"/>
    <property type="match status" value="1"/>
</dbReference>
<dbReference type="InterPro" id="IPR009050">
    <property type="entry name" value="Globin-like_sf"/>
</dbReference>
<dbReference type="InterPro" id="IPR012128">
    <property type="entry name" value="Phycobilisome_asu/bsu"/>
</dbReference>
<dbReference type="InterPro" id="IPR038719">
    <property type="entry name" value="Phycobilisome_asu/bsu_sf"/>
</dbReference>
<dbReference type="InterPro" id="IPR006247">
    <property type="entry name" value="Phycocyanin_b"/>
</dbReference>
<dbReference type="NCBIfam" id="TIGR01339">
    <property type="entry name" value="phycocy_beta"/>
    <property type="match status" value="1"/>
</dbReference>
<dbReference type="PANTHER" id="PTHR34011:SF7">
    <property type="entry name" value="C-PHYCOCYANIN BETA SUBUNIT"/>
    <property type="match status" value="1"/>
</dbReference>
<dbReference type="PANTHER" id="PTHR34011">
    <property type="entry name" value="PHYCOBILISOME 32.1 KDA LINKER POLYPEPTIDE, PHYCOCYANIN-ASSOCIATED, ROD 2-RELATED"/>
    <property type="match status" value="1"/>
</dbReference>
<dbReference type="Pfam" id="PF00502">
    <property type="entry name" value="Phycobilisome"/>
    <property type="match status" value="1"/>
</dbReference>
<dbReference type="PIRSF" id="PIRSF000081">
    <property type="entry name" value="Phycocyanin"/>
    <property type="match status" value="1"/>
</dbReference>
<dbReference type="SUPFAM" id="SSF46458">
    <property type="entry name" value="Globin-like"/>
    <property type="match status" value="1"/>
</dbReference>
<proteinExistence type="evidence at transcript level"/>
<comment type="function">
    <text>Light-harvesting photosynthetic bile pigment-protein from the phycobiliprotein complex (phycobilisome, PBS). Phycocyanin is the major phycobiliprotein in the PBS rod.</text>
</comment>
<comment type="subunit">
    <text evidence="2">Heterodimer of an alpha and a beta subunit, which further assembles into trimers and the trimers into hexamers.</text>
</comment>
<comment type="subcellular location">
    <subcellularLocation>
        <location evidence="1">Cellular thylakoid membrane</location>
        <topology evidence="1">Peripheral membrane protein</topology>
        <orientation evidence="1">Cytoplasmic side</orientation>
    </subcellularLocation>
    <text evidence="1">Part of the phycobilisome rod.</text>
</comment>
<comment type="induction">
    <text evidence="3">Phycocyanin-2 is expressed in red but not in green light (inducible phycocyanin).</text>
</comment>
<comment type="PTM">
    <text evidence="1 2">Contains two covalently linked bilin chromophores.</text>
</comment>
<comment type="similarity">
    <text evidence="4">Belongs to the phycobiliprotein family.</text>
</comment>
<keyword id="KW-0042">Antenna complex</keyword>
<keyword id="KW-0089">Bile pigment</keyword>
<keyword id="KW-0157">Chromophore</keyword>
<keyword id="KW-0249">Electron transport</keyword>
<keyword id="KW-0472">Membrane</keyword>
<keyword id="KW-0488">Methylation</keyword>
<keyword id="KW-0602">Photosynthesis</keyword>
<keyword id="KW-0605">Phycobilisome</keyword>
<keyword id="KW-0793">Thylakoid</keyword>
<keyword id="KW-0813">Transport</keyword>
<organism>
    <name type="scientific">Microchaete diplosiphon</name>
    <name type="common">Fremyella diplosiphon</name>
    <dbReference type="NCBI Taxonomy" id="1197"/>
    <lineage>
        <taxon>Bacteria</taxon>
        <taxon>Bacillati</taxon>
        <taxon>Cyanobacteriota</taxon>
        <taxon>Cyanophyceae</taxon>
        <taxon>Nostocales</taxon>
        <taxon>Rivulariaceae</taxon>
        <taxon>Microchaete</taxon>
    </lineage>
</organism>
<reference key="1">
    <citation type="journal article" date="1988" name="Nucleic Acids Res.">
        <title>Complete nucleotide sequence of the red-light specific set of phycocyanin genes from the cyanobacterium Calothrix PCC 7601.</title>
        <authorList>
            <person name="Capuano V."/>
            <person name="Mazel D."/>
            <person name="Tandeau de Marsac N."/>
            <person name="Houmard J."/>
        </authorList>
    </citation>
    <scope>NUCLEOTIDE SEQUENCE [GENOMIC DNA]</scope>
    <source>
        <strain>UTEX 481 / PCC 7601 / SAG 1410-2</strain>
    </source>
</reference>
<reference key="2">
    <citation type="journal article" date="1988" name="J. Mol. Biol.">
        <title>Molecular characterization and evolution of sequences encoding light-harvesting components in the chromatically adapting cyanobacterium Fremyella diplosiphon.</title>
        <authorList>
            <person name="Conley P.B."/>
            <person name="Lemaux P.G."/>
            <person name="Grossman A."/>
        </authorList>
    </citation>
    <scope>NUCLEOTIDE SEQUENCE [GENOMIC DNA]</scope>
</reference>
<reference key="3">
    <citation type="journal article" date="1991" name="Plant Cell">
        <title>Hormogonium Differentiation in the Cyanobacterium Calothrix: A Photoregulated Developmental Process.</title>
        <authorList>
            <person name="Damerval T."/>
            <person name="Guglielmi G."/>
            <person name="Houmard J."/>
            <person name="De Marsac N.T."/>
        </authorList>
    </citation>
    <scope>INDUCTION</scope>
    <source>
        <strain>UTEX 481 / PCC 7601 / SAG 1410-2</strain>
    </source>
</reference>
<sequence length="172" mass="18122">MLDAFTKVVSQADTRGAYISDAEIDALKTMVAAGSKRMDVVNRITGNASTIVANAARALFEEQPQLIAPGGNAYTNRRMAACLRDMEIILRYVTYAVFAGDASVLDDRCLNGLRETYQALGVPGASVSTGVQKMKEAAIAIANDPSGVTRGDCSSLMSELGSYFDRAAAAVG</sequence>
<protein>
    <recommendedName>
        <fullName>C-phycocyanin-2 beta subunit</fullName>
    </recommendedName>
</protein>